<sequence length="127" mass="12408">MLSLLSKAVSLAILVTAVVASPAGNGVEWSGGGTTTVTVTASSPTTTVTQSQCSTGDQKCCQSVQNSSAAGVSSLLGLLGIVLSGTDVPVGLTCLPIVGGACQSQAVCCTDNSYGNLISLGCSPLQL</sequence>
<comment type="function">
    <text evidence="4 5 7">Aerial growth, conidiation, and dispersal of filamentous fungi in the environment rely upon a capability of their secreting small amphipathic proteins called hydrophobins (HPBs) with low sequence identity. Class I can self-assemble into an outermost layer of rodlet bundles on aerial cell surfaces, conferring cellular hydrophobicity that supports fungal growth, development and dispersal; whereas Class II form highly ordered films at water-air interfaces through intermolecular interactions but contribute nothing to the rodlet structure (Probable). Hyd1 is a class I hydrophobin that plays a role in fruiting body initiation rather than in mature fruit body maintenance (PubMed:10754238, PubMed:12400697). Seems to be involved in the formation in the extracellular matrix of lined air channels with a hydrophobic membrane. These channels may help to provide gas exchange during respiration in mycelial tissues of developing fruiting bodies and are formed all over the mycelial tissues of these developing fruiting bodies except for the top parts of the pileus (cap) and for the prehymenophore (PubMed:12400697).</text>
</comment>
<comment type="subunit">
    <text evidence="1">Self-assembles to form functional amyloid fibrils called rodlets. Self-assembly into fibrillar rodlets occurs spontaneously at hydrophobic:hydrophilic interfaces and the rodlets further associate laterally to form amphipathic monolayers.</text>
</comment>
<comment type="subcellular location">
    <subcellularLocation>
        <location evidence="1">Secreted</location>
    </subcellularLocation>
    <subcellularLocation>
        <location evidence="1">Secreted</location>
        <location evidence="1">Cell wall</location>
    </subcellularLocation>
</comment>
<comment type="tissue specificity">
    <text evidence="5">Expressed everywhere in the mycelial tissues of developing fruiting bodies except for the top parts of the pileus (cap) and for the prehymenophore; but high level of the transcript is detected in the parts surrounding the prehymenophore.</text>
</comment>
<comment type="developmental stage">
    <text evidence="4">The transcript level is high in primordium.</text>
</comment>
<comment type="similarity">
    <text evidence="7">Belongs to the fungal hydrophobin family.</text>
</comment>
<comment type="sequence caution" evidence="7">
    <conflict type="erroneous gene model prediction">
        <sequence resource="EMBL-CDS" id="GAW03935"/>
    </conflict>
</comment>
<keyword id="KW-0134">Cell wall</keyword>
<keyword id="KW-1015">Disulfide bond</keyword>
<keyword id="KW-0325">Glycoprotein</keyword>
<keyword id="KW-1185">Reference proteome</keyword>
<keyword id="KW-0964">Secreted</keyword>
<keyword id="KW-0732">Signal</keyword>
<dbReference type="EMBL" id="AF217807">
    <property type="protein sequence ID" value="AAF61065.1"/>
    <property type="molecule type" value="Genomic_DNA"/>
</dbReference>
<dbReference type="EMBL" id="AF176647">
    <property type="protein sequence ID" value="AAG00900.1"/>
    <property type="molecule type" value="mRNA"/>
</dbReference>
<dbReference type="EMBL" id="BDGU01000166">
    <property type="protein sequence ID" value="GAW03935.1"/>
    <property type="status" value="ALT_SEQ"/>
    <property type="molecule type" value="Genomic_DNA"/>
</dbReference>
<dbReference type="SMR" id="Q9P8T0"/>
<dbReference type="OrthoDB" id="4225815at2759"/>
<dbReference type="Proteomes" id="UP000188533">
    <property type="component" value="Unassembled WGS sequence"/>
</dbReference>
<dbReference type="GO" id="GO:0005576">
    <property type="term" value="C:extracellular region"/>
    <property type="evidence" value="ECO:0007669"/>
    <property type="project" value="UniProtKB-KW"/>
</dbReference>
<dbReference type="GO" id="GO:0009277">
    <property type="term" value="C:fungal-type cell wall"/>
    <property type="evidence" value="ECO:0007669"/>
    <property type="project" value="InterPro"/>
</dbReference>
<dbReference type="GO" id="GO:0005199">
    <property type="term" value="F:structural constituent of cell wall"/>
    <property type="evidence" value="ECO:0007669"/>
    <property type="project" value="InterPro"/>
</dbReference>
<dbReference type="CDD" id="cd23507">
    <property type="entry name" value="hydrophobin_I"/>
    <property type="match status" value="1"/>
</dbReference>
<dbReference type="InterPro" id="IPR001338">
    <property type="entry name" value="Hydrophobin"/>
</dbReference>
<dbReference type="Pfam" id="PF01185">
    <property type="entry name" value="Hydrophobin"/>
    <property type="match status" value="1"/>
</dbReference>
<dbReference type="SMART" id="SM00075">
    <property type="entry name" value="HYDRO"/>
    <property type="match status" value="1"/>
</dbReference>
<reference key="1">
    <citation type="journal article" date="2000" name="FEMS Microbiol. Lett.">
        <title>Cloning and characterization of two hydrophobin genes differentially expressed during fruit body development in Lentinula edodes.</title>
        <authorList>
            <person name="Ng W.L."/>
            <person name="Ng T.P."/>
            <person name="Kwan H.S."/>
        </authorList>
    </citation>
    <scope>NUCLEOTIDE SEQUENCE [GENOMIC DNA / MRNA]</scope>
    <scope>DEVELOPMENTAL STAGE</scope>
</reference>
<reference key="2">
    <citation type="journal article" date="2017" name="Appl. Environ. Microbiol.">
        <title>Lentinula edodes genome survey and postharvest transcriptome analysis.</title>
        <authorList>
            <person name="Sakamoto Y."/>
            <person name="Nakade K."/>
            <person name="Sato S."/>
            <person name="Yoshida K."/>
            <person name="Miyazaki K."/>
            <person name="Natsume S."/>
            <person name="Konno N."/>
        </authorList>
    </citation>
    <scope>NUCLEOTIDE SEQUENCE [LARGE SCALE GENOMIC DNA]</scope>
    <source>
        <strain>NBRC 111202</strain>
    </source>
</reference>
<reference key="3">
    <citation type="journal article" date="2002" name="Biosci. Biotechnol. Biochem.">
        <title>Distribution of hydrophobin 1 gene transcript in developing fruiting bodies of Lentinula edodes.</title>
        <authorList>
            <person name="Nishizawa H."/>
            <person name="Miyazaki Y."/>
            <person name="Kaneko S."/>
            <person name="Shishido K."/>
        </authorList>
    </citation>
    <scope>FUNCTION</scope>
    <scope>TISSUE SPECIFICITY</scope>
</reference>
<gene>
    <name evidence="6" type="primary">hyd1</name>
    <name type="ORF">LENED_005690</name>
</gene>
<protein>
    <recommendedName>
        <fullName evidence="6">Class I hydrophobin 1</fullName>
    </recommendedName>
</protein>
<name>HYD1_LENED</name>
<feature type="signal peptide" evidence="2">
    <location>
        <begin position="1"/>
        <end position="20"/>
    </location>
</feature>
<feature type="chain" id="PRO_5013983889" description="Class I hydrophobin 1">
    <location>
        <begin position="21"/>
        <end position="127"/>
    </location>
</feature>
<feature type="glycosylation site" description="N-linked (GlcNAc...) asparagine" evidence="3">
    <location>
        <position position="66"/>
    </location>
</feature>
<feature type="disulfide bond" evidence="1">
    <location>
        <begin position="53"/>
        <end position="108"/>
    </location>
</feature>
<feature type="disulfide bond" evidence="1">
    <location>
        <begin position="60"/>
        <end position="102"/>
    </location>
</feature>
<feature type="disulfide bond" evidence="1">
    <location>
        <begin position="61"/>
        <end position="94"/>
    </location>
</feature>
<feature type="disulfide bond" evidence="1">
    <location>
        <begin position="109"/>
        <end position="122"/>
    </location>
</feature>
<accession>Q9P8T0</accession>
<accession>A0A1Q3E9N5</accession>
<proteinExistence type="evidence at transcript level"/>
<evidence type="ECO:0000250" key="1">
    <source>
        <dbReference type="UniProtKB" id="Q04571"/>
    </source>
</evidence>
<evidence type="ECO:0000255" key="2"/>
<evidence type="ECO:0000255" key="3">
    <source>
        <dbReference type="PROSITE-ProRule" id="PRU00498"/>
    </source>
</evidence>
<evidence type="ECO:0000269" key="4">
    <source>
    </source>
</evidence>
<evidence type="ECO:0000269" key="5">
    <source>
    </source>
</evidence>
<evidence type="ECO:0000303" key="6">
    <source>
    </source>
</evidence>
<evidence type="ECO:0000305" key="7"/>
<organism>
    <name type="scientific">Lentinula edodes</name>
    <name type="common">Shiitake mushroom</name>
    <name type="synonym">Lentinus edodes</name>
    <dbReference type="NCBI Taxonomy" id="5353"/>
    <lineage>
        <taxon>Eukaryota</taxon>
        <taxon>Fungi</taxon>
        <taxon>Dikarya</taxon>
        <taxon>Basidiomycota</taxon>
        <taxon>Agaricomycotina</taxon>
        <taxon>Agaricomycetes</taxon>
        <taxon>Agaricomycetidae</taxon>
        <taxon>Agaricales</taxon>
        <taxon>Marasmiineae</taxon>
        <taxon>Omphalotaceae</taxon>
        <taxon>Lentinula</taxon>
    </lineage>
</organism>